<keyword id="KW-0963">Cytoplasm</keyword>
<keyword id="KW-0489">Methyltransferase</keyword>
<keyword id="KW-1185">Reference proteome</keyword>
<keyword id="KW-0949">S-adenosyl-L-methionine</keyword>
<keyword id="KW-0808">Transferase</keyword>
<sequence>MKWSEICIHTTHEAVEPISNILHEAGASGVVIEDPLDLIKERENVYGEIYQLDPNDYPDEGVIIKAYLPINSFLGETVEGIKETINNLLLYDIDLGRNKITISEVNEEEWATAWKKYYHPVKISEKFTIVPTWEEYTPVHTDELIIEMDPGMAFGTGTHPTTVLCIQALERYVKEGDSVVDVGTGTGILSIASAMLRAKQVEGYDLDPVAVESARLNSKLNKVSDHIEIKQNNLLDGVEGEKDIIVANILAEVILRFTDQAYSLLKDGGYFITSGIIQQKKQEVKDALVKEGFTIVEVLSMEDWVSIIAKK</sequence>
<organism>
    <name type="scientific">Bacillus licheniformis (strain ATCC 14580 / DSM 13 / JCM 2505 / CCUG 7422 / NBRC 12200 / NCIMB 9375 / NCTC 10341 / NRRL NRS-1264 / Gibson 46)</name>
    <dbReference type="NCBI Taxonomy" id="279010"/>
    <lineage>
        <taxon>Bacteria</taxon>
        <taxon>Bacillati</taxon>
        <taxon>Bacillota</taxon>
        <taxon>Bacilli</taxon>
        <taxon>Bacillales</taxon>
        <taxon>Bacillaceae</taxon>
        <taxon>Bacillus</taxon>
    </lineage>
</organism>
<protein>
    <recommendedName>
        <fullName evidence="1">Ribosomal protein L11 methyltransferase</fullName>
        <shortName evidence="1">L11 Mtase</shortName>
        <ecNumber evidence="1">2.1.1.-</ecNumber>
    </recommendedName>
</protein>
<gene>
    <name evidence="1" type="primary">prmA</name>
    <name type="ordered locus">BLi02737</name>
    <name type="ordered locus">BL02099</name>
</gene>
<dbReference type="EC" id="2.1.1.-" evidence="1"/>
<dbReference type="EMBL" id="CP000002">
    <property type="protein sequence ID" value="AAU24246.1"/>
    <property type="molecule type" value="Genomic_DNA"/>
</dbReference>
<dbReference type="EMBL" id="AE017333">
    <property type="protein sequence ID" value="AAU41608.1"/>
    <property type="molecule type" value="Genomic_DNA"/>
</dbReference>
<dbReference type="RefSeq" id="WP_003183664.1">
    <property type="nucleotide sequence ID" value="NC_006322.1"/>
</dbReference>
<dbReference type="SMR" id="Q65H56"/>
<dbReference type="STRING" id="279010.BL02099"/>
<dbReference type="GeneID" id="92860672"/>
<dbReference type="KEGG" id="bld:BLi02737"/>
<dbReference type="KEGG" id="bli:BL02099"/>
<dbReference type="eggNOG" id="COG2264">
    <property type="taxonomic scope" value="Bacteria"/>
</dbReference>
<dbReference type="HOGENOM" id="CLU_049382_0_1_9"/>
<dbReference type="Proteomes" id="UP000000606">
    <property type="component" value="Chromosome"/>
</dbReference>
<dbReference type="GO" id="GO:0005737">
    <property type="term" value="C:cytoplasm"/>
    <property type="evidence" value="ECO:0007669"/>
    <property type="project" value="UniProtKB-SubCell"/>
</dbReference>
<dbReference type="GO" id="GO:0016279">
    <property type="term" value="F:protein-lysine N-methyltransferase activity"/>
    <property type="evidence" value="ECO:0007669"/>
    <property type="project" value="RHEA"/>
</dbReference>
<dbReference type="GO" id="GO:0032259">
    <property type="term" value="P:methylation"/>
    <property type="evidence" value="ECO:0007669"/>
    <property type="project" value="UniProtKB-KW"/>
</dbReference>
<dbReference type="CDD" id="cd02440">
    <property type="entry name" value="AdoMet_MTases"/>
    <property type="match status" value="1"/>
</dbReference>
<dbReference type="Gene3D" id="3.40.50.150">
    <property type="entry name" value="Vaccinia Virus protein VP39"/>
    <property type="match status" value="1"/>
</dbReference>
<dbReference type="HAMAP" id="MF_00735">
    <property type="entry name" value="Methyltr_PrmA"/>
    <property type="match status" value="1"/>
</dbReference>
<dbReference type="InterPro" id="IPR050078">
    <property type="entry name" value="Ribosomal_L11_MeTrfase_PrmA"/>
</dbReference>
<dbReference type="InterPro" id="IPR004498">
    <property type="entry name" value="Ribosomal_PrmA_MeTrfase"/>
</dbReference>
<dbReference type="InterPro" id="IPR029063">
    <property type="entry name" value="SAM-dependent_MTases_sf"/>
</dbReference>
<dbReference type="NCBIfam" id="TIGR00406">
    <property type="entry name" value="prmA"/>
    <property type="match status" value="1"/>
</dbReference>
<dbReference type="PANTHER" id="PTHR43648">
    <property type="entry name" value="ELECTRON TRANSFER FLAVOPROTEIN BETA SUBUNIT LYSINE METHYLTRANSFERASE"/>
    <property type="match status" value="1"/>
</dbReference>
<dbReference type="PANTHER" id="PTHR43648:SF1">
    <property type="entry name" value="ELECTRON TRANSFER FLAVOPROTEIN BETA SUBUNIT LYSINE METHYLTRANSFERASE"/>
    <property type="match status" value="1"/>
</dbReference>
<dbReference type="Pfam" id="PF06325">
    <property type="entry name" value="PrmA"/>
    <property type="match status" value="1"/>
</dbReference>
<dbReference type="PIRSF" id="PIRSF000401">
    <property type="entry name" value="RPL11_MTase"/>
    <property type="match status" value="1"/>
</dbReference>
<dbReference type="SUPFAM" id="SSF53335">
    <property type="entry name" value="S-adenosyl-L-methionine-dependent methyltransferases"/>
    <property type="match status" value="1"/>
</dbReference>
<feature type="chain" id="PRO_1000045986" description="Ribosomal protein L11 methyltransferase">
    <location>
        <begin position="1"/>
        <end position="311"/>
    </location>
</feature>
<feature type="binding site" evidence="1">
    <location>
        <position position="162"/>
    </location>
    <ligand>
        <name>S-adenosyl-L-methionine</name>
        <dbReference type="ChEBI" id="CHEBI:59789"/>
    </ligand>
</feature>
<feature type="binding site" evidence="1">
    <location>
        <position position="183"/>
    </location>
    <ligand>
        <name>S-adenosyl-L-methionine</name>
        <dbReference type="ChEBI" id="CHEBI:59789"/>
    </ligand>
</feature>
<feature type="binding site" evidence="1">
    <location>
        <position position="205"/>
    </location>
    <ligand>
        <name>S-adenosyl-L-methionine</name>
        <dbReference type="ChEBI" id="CHEBI:59789"/>
    </ligand>
</feature>
<feature type="binding site" evidence="1">
    <location>
        <position position="248"/>
    </location>
    <ligand>
        <name>S-adenosyl-L-methionine</name>
        <dbReference type="ChEBI" id="CHEBI:59789"/>
    </ligand>
</feature>
<accession>Q65H56</accession>
<accession>Q62SL3</accession>
<comment type="function">
    <text evidence="1">Methylates ribosomal protein L11.</text>
</comment>
<comment type="catalytic activity">
    <reaction evidence="1">
        <text>L-lysyl-[protein] + 3 S-adenosyl-L-methionine = N(6),N(6),N(6)-trimethyl-L-lysyl-[protein] + 3 S-adenosyl-L-homocysteine + 3 H(+)</text>
        <dbReference type="Rhea" id="RHEA:54192"/>
        <dbReference type="Rhea" id="RHEA-COMP:9752"/>
        <dbReference type="Rhea" id="RHEA-COMP:13826"/>
        <dbReference type="ChEBI" id="CHEBI:15378"/>
        <dbReference type="ChEBI" id="CHEBI:29969"/>
        <dbReference type="ChEBI" id="CHEBI:57856"/>
        <dbReference type="ChEBI" id="CHEBI:59789"/>
        <dbReference type="ChEBI" id="CHEBI:61961"/>
    </reaction>
</comment>
<comment type="subcellular location">
    <subcellularLocation>
        <location evidence="1">Cytoplasm</location>
    </subcellularLocation>
</comment>
<comment type="similarity">
    <text evidence="1">Belongs to the methyltransferase superfamily. PrmA family.</text>
</comment>
<name>PRMA_BACLD</name>
<reference key="1">
    <citation type="journal article" date="2004" name="J. Mol. Microbiol. Biotechnol.">
        <title>The complete genome sequence of Bacillus licheniformis DSM13, an organism with great industrial potential.</title>
        <authorList>
            <person name="Veith B."/>
            <person name="Herzberg C."/>
            <person name="Steckel S."/>
            <person name="Feesche J."/>
            <person name="Maurer K.H."/>
            <person name="Ehrenreich P."/>
            <person name="Baeumer S."/>
            <person name="Henne A."/>
            <person name="Liesegang H."/>
            <person name="Merkl R."/>
            <person name="Ehrenreich A."/>
            <person name="Gottschalk G."/>
        </authorList>
    </citation>
    <scope>NUCLEOTIDE SEQUENCE [LARGE SCALE GENOMIC DNA]</scope>
    <source>
        <strain>ATCC 14580 / DSM 13 / JCM 2505 / CCUG 7422 / NBRC 12200 / NCIMB 9375 / NCTC 10341 / NRRL NRS-1264 / Gibson 46</strain>
    </source>
</reference>
<reference key="2">
    <citation type="journal article" date="2004" name="Genome Biol.">
        <title>Complete genome sequence of the industrial bacterium Bacillus licheniformis and comparisons with closely related Bacillus species.</title>
        <authorList>
            <person name="Rey M.W."/>
            <person name="Ramaiya P."/>
            <person name="Nelson B.A."/>
            <person name="Brody-Karpin S.D."/>
            <person name="Zaretsky E.J."/>
            <person name="Tang M."/>
            <person name="Lopez de Leon A."/>
            <person name="Xiang H."/>
            <person name="Gusti V."/>
            <person name="Clausen I.G."/>
            <person name="Olsen P.B."/>
            <person name="Rasmussen M.D."/>
            <person name="Andersen J.T."/>
            <person name="Joergensen P.L."/>
            <person name="Larsen T.S."/>
            <person name="Sorokin A."/>
            <person name="Bolotin A."/>
            <person name="Lapidus A."/>
            <person name="Galleron N."/>
            <person name="Ehrlich S.D."/>
            <person name="Berka R.M."/>
        </authorList>
    </citation>
    <scope>NUCLEOTIDE SEQUENCE [LARGE SCALE GENOMIC DNA]</scope>
    <source>
        <strain>ATCC 14580 / DSM 13 / JCM 2505 / CCUG 7422 / NBRC 12200 / NCIMB 9375 / NCTC 10341 / NRRL NRS-1264 / Gibson 46</strain>
    </source>
</reference>
<proteinExistence type="inferred from homology"/>
<evidence type="ECO:0000255" key="1">
    <source>
        <dbReference type="HAMAP-Rule" id="MF_00735"/>
    </source>
</evidence>